<keyword id="KW-0535">Nitrogen fixation</keyword>
<keyword id="KW-1185">Reference proteome</keyword>
<feature type="chain" id="PRO_0000407266" description="N(2)-fixation sustaining protein CowN">
    <location>
        <begin position="1"/>
        <end position="88"/>
    </location>
</feature>
<proteinExistence type="inferred from homology"/>
<protein>
    <recommendedName>
        <fullName evidence="1">N(2)-fixation sustaining protein CowN</fullName>
    </recommendedName>
    <alternativeName>
        <fullName evidence="1">CO weal-nitrogenase</fullName>
    </alternativeName>
</protein>
<organism>
    <name type="scientific">Rhodomicrobium vannielii (strain ATCC 17100 / DSM 162 / LMG 4299 / NCIMB 10020 / ATH 3.1.1)</name>
    <dbReference type="NCBI Taxonomy" id="648757"/>
    <lineage>
        <taxon>Bacteria</taxon>
        <taxon>Pseudomonadati</taxon>
        <taxon>Pseudomonadota</taxon>
        <taxon>Alphaproteobacteria</taxon>
        <taxon>Hyphomicrobiales</taxon>
        <taxon>Hyphomicrobiaceae</taxon>
        <taxon>Rhodomicrobium</taxon>
    </lineage>
</organism>
<gene>
    <name evidence="1" type="primary">cowN</name>
    <name type="ordered locus">Rvan_1593</name>
</gene>
<comment type="function">
    <text evidence="1">Is required to sustain N(2)-dependent growth in the presence of low levels of carbon monoxide (CO). Probably acts by protecting the N(2) fixation ability of the nitrogenase complex, which is inactivated in the presence of CO.</text>
</comment>
<comment type="similarity">
    <text evidence="1">Belongs to the CowN family.</text>
</comment>
<sequence length="88" mass="10403">MSEQIDRYVSFKNIDCNARAGQMMDALQPYIQAAENPFWAYFQQKRAEFNAKGYDDLRVLHNYLPTLKELIEDDELLAQLEDLEYTCM</sequence>
<dbReference type="EMBL" id="CP002292">
    <property type="protein sequence ID" value="ADP70845.1"/>
    <property type="molecule type" value="Genomic_DNA"/>
</dbReference>
<dbReference type="RefSeq" id="WP_013419241.1">
    <property type="nucleotide sequence ID" value="NC_014664.1"/>
</dbReference>
<dbReference type="KEGG" id="rva:Rvan_1593"/>
<dbReference type="eggNOG" id="ENOG5032TZQ">
    <property type="taxonomic scope" value="Bacteria"/>
</dbReference>
<dbReference type="HOGENOM" id="CLU_149349_0_0_5"/>
<dbReference type="OrthoDB" id="7689335at2"/>
<dbReference type="Proteomes" id="UP000001399">
    <property type="component" value="Chromosome"/>
</dbReference>
<dbReference type="GO" id="GO:0009399">
    <property type="term" value="P:nitrogen fixation"/>
    <property type="evidence" value="ECO:0007669"/>
    <property type="project" value="UniProtKB-UniRule"/>
</dbReference>
<dbReference type="HAMAP" id="MF_02117">
    <property type="entry name" value="CowN"/>
    <property type="match status" value="1"/>
</dbReference>
<dbReference type="InterPro" id="IPR024899">
    <property type="entry name" value="CowN"/>
</dbReference>
<dbReference type="NCBIfam" id="NF033689">
    <property type="entry name" value="N2Fix_CO_CowN"/>
    <property type="match status" value="1"/>
</dbReference>
<dbReference type="Pfam" id="PF20543">
    <property type="entry name" value="CowN"/>
    <property type="match status" value="1"/>
</dbReference>
<accession>E3I7Z1</accession>
<evidence type="ECO:0000255" key="1">
    <source>
        <dbReference type="HAMAP-Rule" id="MF_02117"/>
    </source>
</evidence>
<name>COWN_RHOVT</name>
<reference key="1">
    <citation type="journal article" date="2011" name="J. Bacteriol.">
        <title>Genome sequences of eight morphologically diverse alphaproteobacteria.</title>
        <authorList>
            <consortium name="US DOE Joint Genome Institute"/>
            <person name="Brown P.J."/>
            <person name="Kysela D.T."/>
            <person name="Buechlein A."/>
            <person name="Hemmerich C."/>
            <person name="Brun Y.V."/>
        </authorList>
    </citation>
    <scope>NUCLEOTIDE SEQUENCE [LARGE SCALE GENOMIC DNA]</scope>
    <source>
        <strain>ATCC 17100 / DSM 162 / LMG 4299 / NCIMB 10020 / ATH 3.1.1</strain>
    </source>
</reference>